<accession>Q8XEV9</accession>
<accession>Q7AMV6</accession>
<feature type="chain" id="PRO_0000316808" description="Leucine efflux protein">
    <location>
        <begin position="1"/>
        <end position="212"/>
    </location>
</feature>
<feature type="transmembrane region" description="Helical" evidence="2">
    <location>
        <begin position="12"/>
        <end position="32"/>
    </location>
</feature>
<feature type="transmembrane region" description="Helical" evidence="2">
    <location>
        <begin position="49"/>
        <end position="69"/>
    </location>
</feature>
<feature type="transmembrane region" description="Helical" evidence="2">
    <location>
        <begin position="81"/>
        <end position="101"/>
    </location>
</feature>
<feature type="transmembrane region" description="Helical" evidence="2">
    <location>
        <begin position="120"/>
        <end position="142"/>
    </location>
</feature>
<feature type="transmembrane region" description="Helical" evidence="2">
    <location>
        <begin position="153"/>
        <end position="173"/>
    </location>
</feature>
<feature type="transmembrane region" description="Helical" evidence="2">
    <location>
        <begin position="188"/>
        <end position="208"/>
    </location>
</feature>
<protein>
    <recommendedName>
        <fullName evidence="1">Leucine efflux protein</fullName>
    </recommendedName>
</protein>
<gene>
    <name type="primary">leuE</name>
    <name type="ordered locus">STY1851</name>
    <name type="ordered locus">t1148</name>
</gene>
<organism>
    <name type="scientific">Salmonella typhi</name>
    <dbReference type="NCBI Taxonomy" id="90370"/>
    <lineage>
        <taxon>Bacteria</taxon>
        <taxon>Pseudomonadati</taxon>
        <taxon>Pseudomonadota</taxon>
        <taxon>Gammaproteobacteria</taxon>
        <taxon>Enterobacterales</taxon>
        <taxon>Enterobacteriaceae</taxon>
        <taxon>Salmonella</taxon>
    </lineage>
</organism>
<dbReference type="EMBL" id="AL513382">
    <property type="protein sequence ID" value="CAD02085.1"/>
    <property type="molecule type" value="Genomic_DNA"/>
</dbReference>
<dbReference type="EMBL" id="AE014613">
    <property type="protein sequence ID" value="AAO68808.1"/>
    <property type="molecule type" value="Genomic_DNA"/>
</dbReference>
<dbReference type="RefSeq" id="NP_456241.1">
    <property type="nucleotide sequence ID" value="NC_003198.1"/>
</dbReference>
<dbReference type="RefSeq" id="WP_000457190.1">
    <property type="nucleotide sequence ID" value="NZ_WSUR01000044.1"/>
</dbReference>
<dbReference type="STRING" id="220341.gene:17585777"/>
<dbReference type="KEGG" id="stt:t1148"/>
<dbReference type="KEGG" id="sty:STY1851"/>
<dbReference type="PATRIC" id="fig|220341.7.peg.1865"/>
<dbReference type="eggNOG" id="COG1280">
    <property type="taxonomic scope" value="Bacteria"/>
</dbReference>
<dbReference type="HOGENOM" id="CLU_079569_3_1_6"/>
<dbReference type="OMA" id="AGVWCGD"/>
<dbReference type="OrthoDB" id="9784202at2"/>
<dbReference type="Proteomes" id="UP000000541">
    <property type="component" value="Chromosome"/>
</dbReference>
<dbReference type="Proteomes" id="UP000002670">
    <property type="component" value="Chromosome"/>
</dbReference>
<dbReference type="GO" id="GO:0005886">
    <property type="term" value="C:plasma membrane"/>
    <property type="evidence" value="ECO:0007669"/>
    <property type="project" value="UniProtKB-SubCell"/>
</dbReference>
<dbReference type="GO" id="GO:0015297">
    <property type="term" value="F:antiporter activity"/>
    <property type="evidence" value="ECO:0007669"/>
    <property type="project" value="UniProtKB-KW"/>
</dbReference>
<dbReference type="GO" id="GO:0015190">
    <property type="term" value="F:L-leucine transmembrane transporter activity"/>
    <property type="evidence" value="ECO:0007669"/>
    <property type="project" value="TreeGrafter"/>
</dbReference>
<dbReference type="GO" id="GO:0015820">
    <property type="term" value="P:L-leucine transport"/>
    <property type="evidence" value="ECO:0007669"/>
    <property type="project" value="TreeGrafter"/>
</dbReference>
<dbReference type="InterPro" id="IPR001123">
    <property type="entry name" value="LeuE-type"/>
</dbReference>
<dbReference type="NCBIfam" id="NF008201">
    <property type="entry name" value="PRK10958.1"/>
    <property type="match status" value="1"/>
</dbReference>
<dbReference type="PANTHER" id="PTHR30086">
    <property type="entry name" value="ARGININE EXPORTER PROTEIN ARGO"/>
    <property type="match status" value="1"/>
</dbReference>
<dbReference type="PANTHER" id="PTHR30086:SF15">
    <property type="entry name" value="LEUCINE EFFLUX PROTEIN"/>
    <property type="match status" value="1"/>
</dbReference>
<dbReference type="Pfam" id="PF01810">
    <property type="entry name" value="LysE"/>
    <property type="match status" value="1"/>
</dbReference>
<dbReference type="PIRSF" id="PIRSF006324">
    <property type="entry name" value="LeuE"/>
    <property type="match status" value="1"/>
</dbReference>
<comment type="function">
    <text evidence="1">Exporter of leucine.</text>
</comment>
<comment type="catalytic activity">
    <reaction evidence="1">
        <text>L-leucine(in) + H(+)(out) = L-leucine(out) + H(+)(in)</text>
        <dbReference type="Rhea" id="RHEA:28731"/>
        <dbReference type="ChEBI" id="CHEBI:15378"/>
        <dbReference type="ChEBI" id="CHEBI:57427"/>
    </reaction>
    <physiologicalReaction direction="left-to-right" evidence="1">
        <dbReference type="Rhea" id="RHEA:28732"/>
    </physiologicalReaction>
</comment>
<comment type="subcellular location">
    <subcellularLocation>
        <location evidence="1">Cell inner membrane</location>
        <topology evidence="2">Multi-pass membrane protein</topology>
    </subcellularLocation>
</comment>
<comment type="similarity">
    <text evidence="3">Belongs to the Rht family.</text>
</comment>
<keyword id="KW-0029">Amino-acid transport</keyword>
<keyword id="KW-0050">Antiport</keyword>
<keyword id="KW-0997">Cell inner membrane</keyword>
<keyword id="KW-1003">Cell membrane</keyword>
<keyword id="KW-0472">Membrane</keyword>
<keyword id="KW-0812">Transmembrane</keyword>
<keyword id="KW-1133">Transmembrane helix</keyword>
<keyword id="KW-0813">Transport</keyword>
<name>LEUE_SALTI</name>
<sequence>MFAEYGVLNYWTYLVGAIFIVLVPGPNTLFVLKNSVGRGVKGGYLAACGVFIGDAILMFLAYAGVATLIKTTPVLFNIVRYLGAFYLLYLGAKILYATLTSKGRAATETVVPFGAIFKRALILSLTNPKAILFYVSFFVQFIDVTAPHTGVSFFILATTLEIVSFCYLSFLILSGAFVTHYIGTKKKLAKVGNSLIGLLFVGFAARLATLQS</sequence>
<reference key="1">
    <citation type="journal article" date="2001" name="Nature">
        <title>Complete genome sequence of a multiple drug resistant Salmonella enterica serovar Typhi CT18.</title>
        <authorList>
            <person name="Parkhill J."/>
            <person name="Dougan G."/>
            <person name="James K.D."/>
            <person name="Thomson N.R."/>
            <person name="Pickard D."/>
            <person name="Wain J."/>
            <person name="Churcher C.M."/>
            <person name="Mungall K.L."/>
            <person name="Bentley S.D."/>
            <person name="Holden M.T.G."/>
            <person name="Sebaihia M."/>
            <person name="Baker S."/>
            <person name="Basham D."/>
            <person name="Brooks K."/>
            <person name="Chillingworth T."/>
            <person name="Connerton P."/>
            <person name="Cronin A."/>
            <person name="Davis P."/>
            <person name="Davies R.M."/>
            <person name="Dowd L."/>
            <person name="White N."/>
            <person name="Farrar J."/>
            <person name="Feltwell T."/>
            <person name="Hamlin N."/>
            <person name="Haque A."/>
            <person name="Hien T.T."/>
            <person name="Holroyd S."/>
            <person name="Jagels K."/>
            <person name="Krogh A."/>
            <person name="Larsen T.S."/>
            <person name="Leather S."/>
            <person name="Moule S."/>
            <person name="O'Gaora P."/>
            <person name="Parry C."/>
            <person name="Quail M.A."/>
            <person name="Rutherford K.M."/>
            <person name="Simmonds M."/>
            <person name="Skelton J."/>
            <person name="Stevens K."/>
            <person name="Whitehead S."/>
            <person name="Barrell B.G."/>
        </authorList>
    </citation>
    <scope>NUCLEOTIDE SEQUENCE [LARGE SCALE GENOMIC DNA]</scope>
    <source>
        <strain>CT18</strain>
    </source>
</reference>
<reference key="2">
    <citation type="journal article" date="2003" name="J. Bacteriol.">
        <title>Comparative genomics of Salmonella enterica serovar Typhi strains Ty2 and CT18.</title>
        <authorList>
            <person name="Deng W."/>
            <person name="Liou S.-R."/>
            <person name="Plunkett G. III"/>
            <person name="Mayhew G.F."/>
            <person name="Rose D.J."/>
            <person name="Burland V."/>
            <person name="Kodoyianni V."/>
            <person name="Schwartz D.C."/>
            <person name="Blattner F.R."/>
        </authorList>
    </citation>
    <scope>NUCLEOTIDE SEQUENCE [LARGE SCALE GENOMIC DNA]</scope>
    <source>
        <strain>ATCC 700931 / Ty2</strain>
    </source>
</reference>
<proteinExistence type="inferred from homology"/>
<evidence type="ECO:0000250" key="1">
    <source>
        <dbReference type="UniProtKB" id="P76249"/>
    </source>
</evidence>
<evidence type="ECO:0000255" key="2"/>
<evidence type="ECO:0000305" key="3"/>